<gene>
    <name type="primary">CACNB1</name>
    <name type="synonym">CACNLB1</name>
</gene>
<organism>
    <name type="scientific">Oryctolagus cuniculus</name>
    <name type="common">Rabbit</name>
    <dbReference type="NCBI Taxonomy" id="9986"/>
    <lineage>
        <taxon>Eukaryota</taxon>
        <taxon>Metazoa</taxon>
        <taxon>Chordata</taxon>
        <taxon>Craniata</taxon>
        <taxon>Vertebrata</taxon>
        <taxon>Euteleostomi</taxon>
        <taxon>Mammalia</taxon>
        <taxon>Eutheria</taxon>
        <taxon>Euarchontoglires</taxon>
        <taxon>Glires</taxon>
        <taxon>Lagomorpha</taxon>
        <taxon>Leporidae</taxon>
        <taxon>Oryctolagus</taxon>
    </lineage>
</organism>
<reference key="1">
    <citation type="journal article" date="1989" name="Science">
        <title>Primary structure of the beta subunit of the DHP-sensitive calcium channel from skeletal muscle.</title>
        <authorList>
            <person name="Ruth P."/>
            <person name="Roehrkasten A."/>
            <person name="Biel M."/>
            <person name="Bosse E."/>
            <person name="Regulla S."/>
            <person name="Meyer H.E."/>
            <person name="Flockerzi V."/>
            <person name="Hoffmann F."/>
        </authorList>
    </citation>
    <scope>NUCLEOTIDE SEQUENCE [MRNA]</scope>
    <scope>PARTIAL PROTEIN SEQUENCE</scope>
    <source>
        <tissue>Skeletal muscle</tissue>
    </source>
</reference>
<reference key="2">
    <citation type="journal article" date="1994" name="Nature">
        <title>Calcium channel beta-subunit binds to a conserved motif in the I-II cytoplasmic linker of the alpha 1-subunit.</title>
        <authorList>
            <person name="Pragnell M."/>
            <person name="de Waard M."/>
            <person name="Mori Y."/>
            <person name="Tanabe T."/>
            <person name="Snutch T.P."/>
            <person name="Campbell K.P."/>
        </authorList>
    </citation>
    <scope>FUNCTION</scope>
    <scope>SUBUNIT</scope>
    <scope>SUBCELLULAR LOCATION</scope>
    <scope>INTERACTION WITH CACNA1A; CACNA1B; CACNA1C AND CACNA1S</scope>
</reference>
<reference key="3">
    <citation type="journal article" date="2011" name="FASEB J.">
        <title>Cardiac L-type calcium channel (Cav1.2) associates with gamma subunits.</title>
        <authorList>
            <person name="Yang L."/>
            <person name="Katchman A."/>
            <person name="Morrow J.P."/>
            <person name="Doshi D."/>
            <person name="Marx S.O."/>
        </authorList>
    </citation>
    <scope>SUBUNIT</scope>
</reference>
<reference evidence="11 12" key="4">
    <citation type="journal article" date="2016" name="Nature">
        <title>Structure of the voltage-gated calcium channel Ca(v)1.1 at 3.6A resolution.</title>
        <authorList>
            <person name="Wu J."/>
            <person name="Yan Z."/>
            <person name="Li Z."/>
            <person name="Qian X."/>
            <person name="Lu S."/>
            <person name="Dong M."/>
            <person name="Zhou Q."/>
            <person name="Yan N."/>
        </authorList>
    </citation>
    <scope>STRUCTURE BY ELECTRON MICROSCOPY (3.60 ANGSTROMS) OF 80-174 AND 265-463</scope>
    <scope>SUBCELLULAR LOCATION</scope>
    <scope>SUBUNIT</scope>
</reference>
<accession>P19517</accession>
<protein>
    <recommendedName>
        <fullName>Voltage-dependent L-type calcium channel subunit beta-1</fullName>
        <shortName>CAB1</shortName>
    </recommendedName>
    <alternativeName>
        <fullName>Calcium channel voltage-dependent subunit beta 1</fullName>
    </alternativeName>
</protein>
<name>CACB1_RABIT</name>
<evidence type="ECO:0000250" key="1">
    <source>
        <dbReference type="UniProtKB" id="P54283"/>
    </source>
</evidence>
<evidence type="ECO:0000250" key="2">
    <source>
        <dbReference type="UniProtKB" id="Q02641"/>
    </source>
</evidence>
<evidence type="ECO:0000250" key="3">
    <source>
        <dbReference type="UniProtKB" id="Q8R3Z5"/>
    </source>
</evidence>
<evidence type="ECO:0000255" key="4">
    <source>
        <dbReference type="PROSITE-ProRule" id="PRU00192"/>
    </source>
</evidence>
<evidence type="ECO:0000256" key="5">
    <source>
        <dbReference type="SAM" id="MobiDB-lite"/>
    </source>
</evidence>
<evidence type="ECO:0000269" key="6">
    <source>
    </source>
</evidence>
<evidence type="ECO:0000269" key="7">
    <source>
    </source>
</evidence>
<evidence type="ECO:0000269" key="8">
    <source>
    </source>
</evidence>
<evidence type="ECO:0000305" key="9"/>
<evidence type="ECO:0000305" key="10">
    <source>
    </source>
</evidence>
<evidence type="ECO:0007744" key="11">
    <source>
        <dbReference type="PDB" id="5GJV"/>
    </source>
</evidence>
<evidence type="ECO:0007744" key="12">
    <source>
        <dbReference type="PDB" id="5GJW"/>
    </source>
</evidence>
<evidence type="ECO:0007829" key="13">
    <source>
        <dbReference type="PDB" id="6JP8"/>
    </source>
</evidence>
<keyword id="KW-0002">3D-structure</keyword>
<keyword id="KW-0106">Calcium</keyword>
<keyword id="KW-0107">Calcium channel</keyword>
<keyword id="KW-0109">Calcium transport</keyword>
<keyword id="KW-1003">Cell membrane</keyword>
<keyword id="KW-0903">Direct protein sequencing</keyword>
<keyword id="KW-0407">Ion channel</keyword>
<keyword id="KW-0406">Ion transport</keyword>
<keyword id="KW-0472">Membrane</keyword>
<keyword id="KW-0597">Phosphoprotein</keyword>
<keyword id="KW-1185">Reference proteome</keyword>
<keyword id="KW-0728">SH3 domain</keyword>
<keyword id="KW-0813">Transport</keyword>
<keyword id="KW-0851">Voltage-gated channel</keyword>
<sequence>MVQKTSMSRGPYPPSQEIPMEVFDPSPQGKYSKRKGRFKRSDGSTSSDTTSNSFVRQGSAESYTSRPSDSDVSLEEDREALRKEAERQALAQLEKAKTKPVAFAVRTNVGYNPSPGDEVPVEGVAITFEPKDFLHIKEKYNNDWWIGRLVKEGCEVGFIPSPVKLDSLRLLQEQKLRQSRLSSSKSGDNSSSSLGDVVTGTRRPTPPASGNEMTNLAFELEPLDLEEDEAELGEQSGSAKTSVSSVTTPPPHGTRIPFFKKTEHVPPYDVVPSMRPIILVGPSLKGYEVTDMMQKALFDFLKHLFDGRISITRVTADISLAKRSVLNNPSKHIIIERSNTRSSLAEVQSEIERIFELARTLQLVALDADTINHPAQLSKTSLAPIIVYIKITSPKVLQRLIKSRGKSQSKHLNVQIAASEKLAQCPPEMFDIILDENQLEDACEHLAEYLEAYWKATHPPSSTPPNPLLNRTMATAALAASPAPVSNLQVQVLTSLRRNLSFWGGLETSQRGGGAVPQQQEHAM</sequence>
<feature type="chain" id="PRO_0000144048" description="Voltage-dependent L-type calcium channel subunit beta-1">
    <location>
        <begin position="1"/>
        <end position="524"/>
    </location>
</feature>
<feature type="domain" description="SH3" evidence="4">
    <location>
        <begin position="100"/>
        <end position="169"/>
    </location>
</feature>
<feature type="region of interest" description="Disordered" evidence="5">
    <location>
        <begin position="1"/>
        <end position="77"/>
    </location>
</feature>
<feature type="region of interest" description="Disordered" evidence="5">
    <location>
        <begin position="179"/>
        <end position="214"/>
    </location>
</feature>
<feature type="region of interest" description="Disordered" evidence="5">
    <location>
        <begin position="228"/>
        <end position="259"/>
    </location>
</feature>
<feature type="compositionally biased region" description="Low complexity" evidence="5">
    <location>
        <begin position="43"/>
        <end position="53"/>
    </location>
</feature>
<feature type="compositionally biased region" description="Polar residues" evidence="5">
    <location>
        <begin position="54"/>
        <end position="71"/>
    </location>
</feature>
<feature type="compositionally biased region" description="Low complexity" evidence="5">
    <location>
        <begin position="179"/>
        <end position="193"/>
    </location>
</feature>
<feature type="compositionally biased region" description="Polar residues" evidence="5">
    <location>
        <begin position="235"/>
        <end position="247"/>
    </location>
</feature>
<feature type="modified residue" description="Phosphoserine" evidence="1">
    <location>
        <position position="44"/>
    </location>
</feature>
<feature type="modified residue" description="Phosphoserine" evidence="1">
    <location>
        <position position="47"/>
    </location>
</feature>
<feature type="modified residue" description="Phosphoserine" evidence="1">
    <location>
        <position position="73"/>
    </location>
</feature>
<feature type="modified residue" description="Phosphoserine" evidence="3">
    <location>
        <position position="186"/>
    </location>
</feature>
<feature type="modified residue" description="Phosphoserine" evidence="1">
    <location>
        <position position="193"/>
    </location>
</feature>
<feature type="sequence conflict" description="In Ref. 1; AAA56855." evidence="9" ref="1">
    <original>L</original>
    <variation>R</variation>
    <location>
        <position position="304"/>
    </location>
</feature>
<feature type="helix" evidence="13">
    <location>
        <begin position="80"/>
        <end position="94"/>
    </location>
</feature>
<feature type="strand" evidence="13">
    <location>
        <begin position="97"/>
        <end position="99"/>
    </location>
</feature>
<feature type="strand" evidence="13">
    <location>
        <begin position="103"/>
        <end position="107"/>
    </location>
</feature>
<feature type="strand" evidence="13">
    <location>
        <begin position="133"/>
        <end position="139"/>
    </location>
</feature>
<feature type="strand" evidence="13">
    <location>
        <begin position="141"/>
        <end position="151"/>
    </location>
</feature>
<feature type="strand" evidence="13">
    <location>
        <begin position="156"/>
        <end position="160"/>
    </location>
</feature>
<feature type="helix" evidence="13">
    <location>
        <begin position="162"/>
        <end position="170"/>
    </location>
</feature>
<feature type="turn" evidence="13">
    <location>
        <begin position="171"/>
        <end position="173"/>
    </location>
</feature>
<feature type="strand" evidence="13">
    <location>
        <begin position="267"/>
        <end position="271"/>
    </location>
</feature>
<feature type="strand" evidence="13">
    <location>
        <begin position="276"/>
        <end position="280"/>
    </location>
</feature>
<feature type="strand" evidence="13">
    <location>
        <begin position="285"/>
        <end position="287"/>
    </location>
</feature>
<feature type="helix" evidence="13">
    <location>
        <begin position="288"/>
        <end position="303"/>
    </location>
</feature>
<feature type="turn" evidence="13">
    <location>
        <begin position="304"/>
        <end position="307"/>
    </location>
</feature>
<feature type="strand" evidence="13">
    <location>
        <begin position="308"/>
        <end position="313"/>
    </location>
</feature>
<feature type="helix" evidence="13">
    <location>
        <begin position="344"/>
        <end position="356"/>
    </location>
</feature>
<feature type="turn" evidence="13">
    <location>
        <begin position="357"/>
        <end position="361"/>
    </location>
</feature>
<feature type="strand" evidence="13">
    <location>
        <begin position="363"/>
        <end position="367"/>
    </location>
</feature>
<feature type="helix" evidence="13">
    <location>
        <begin position="375"/>
        <end position="377"/>
    </location>
</feature>
<feature type="strand" evidence="13">
    <location>
        <begin position="378"/>
        <end position="381"/>
    </location>
</feature>
<feature type="strand" evidence="13">
    <location>
        <begin position="385"/>
        <end position="389"/>
    </location>
</feature>
<feature type="helix" evidence="13">
    <location>
        <begin position="394"/>
        <end position="401"/>
    </location>
</feature>
<feature type="helix" evidence="13">
    <location>
        <begin position="408"/>
        <end position="410"/>
    </location>
</feature>
<feature type="helix" evidence="13">
    <location>
        <begin position="412"/>
        <end position="424"/>
    </location>
</feature>
<feature type="helix" evidence="13">
    <location>
        <begin position="427"/>
        <end position="429"/>
    </location>
</feature>
<feature type="strand" evidence="13">
    <location>
        <begin position="430"/>
        <end position="434"/>
    </location>
</feature>
<feature type="helix" evidence="13">
    <location>
        <begin position="439"/>
        <end position="457"/>
    </location>
</feature>
<dbReference type="EMBL" id="M25817">
    <property type="protein sequence ID" value="AAA31180.1"/>
    <property type="molecule type" value="mRNA"/>
</dbReference>
<dbReference type="EMBL" id="M25514">
    <property type="protein sequence ID" value="AAA56855.1"/>
    <property type="molecule type" value="mRNA"/>
</dbReference>
<dbReference type="PIR" id="A41347">
    <property type="entry name" value="A41347"/>
</dbReference>
<dbReference type="RefSeq" id="NP_001075748.1">
    <property type="nucleotide sequence ID" value="NM_001082279.1"/>
</dbReference>
<dbReference type="PDB" id="5GJV">
    <property type="method" value="EM"/>
    <property type="resolution" value="3.60 A"/>
    <property type="chains" value="B=80-174, C=265-463"/>
</dbReference>
<dbReference type="PDB" id="5GJW">
    <property type="method" value="EM"/>
    <property type="resolution" value="3.90 A"/>
    <property type="chains" value="B=80-174, C=265-463"/>
</dbReference>
<dbReference type="PDB" id="6JP5">
    <property type="method" value="EM"/>
    <property type="resolution" value="2.90 A"/>
    <property type="chains" value="B/C=80-524"/>
</dbReference>
<dbReference type="PDB" id="6JP8">
    <property type="method" value="EM"/>
    <property type="resolution" value="2.70 A"/>
    <property type="chains" value="B/C=80-524"/>
</dbReference>
<dbReference type="PDBsum" id="5GJV"/>
<dbReference type="PDBsum" id="5GJW"/>
<dbReference type="PDBsum" id="6JP5"/>
<dbReference type="PDBsum" id="6JP8"/>
<dbReference type="EMDB" id="EMD-9513"/>
<dbReference type="EMDB" id="EMD-9515"/>
<dbReference type="EMDB" id="EMD-9866"/>
<dbReference type="EMDB" id="EMD-9867"/>
<dbReference type="EMDB" id="EMD-9868"/>
<dbReference type="EMDB" id="EMD-9869"/>
<dbReference type="SMR" id="P19517"/>
<dbReference type="BioGRID" id="1172132">
    <property type="interactions" value="2"/>
</dbReference>
<dbReference type="ComplexPortal" id="CPX-3189">
    <property type="entry name" value="Cav1.1 voltage-gated calcium channel complex, CACNA2D1-CACNB1-CACNG1 variant"/>
</dbReference>
<dbReference type="CORUM" id="P19517"/>
<dbReference type="DIP" id="DIP-37525N"/>
<dbReference type="IntAct" id="P19517">
    <property type="interactions" value="2"/>
</dbReference>
<dbReference type="STRING" id="9986.ENSOCUP00000042598"/>
<dbReference type="iPTMnet" id="P19517"/>
<dbReference type="PaxDb" id="9986-ENSOCUP00000005545"/>
<dbReference type="GeneID" id="100009109"/>
<dbReference type="KEGG" id="ocu:100009109"/>
<dbReference type="CTD" id="782"/>
<dbReference type="eggNOG" id="KOG3812">
    <property type="taxonomic scope" value="Eukaryota"/>
</dbReference>
<dbReference type="InParanoid" id="P19517"/>
<dbReference type="OrthoDB" id="5962384at2759"/>
<dbReference type="Proteomes" id="UP000001811">
    <property type="component" value="Unplaced"/>
</dbReference>
<dbReference type="GO" id="GO:1990454">
    <property type="term" value="C:L-type voltage-gated calcium channel complex"/>
    <property type="evidence" value="ECO:0000314"/>
    <property type="project" value="UniProtKB"/>
</dbReference>
<dbReference type="GO" id="GO:0030315">
    <property type="term" value="C:T-tubule"/>
    <property type="evidence" value="ECO:0000314"/>
    <property type="project" value="UniProtKB"/>
</dbReference>
<dbReference type="GO" id="GO:0005245">
    <property type="term" value="F:voltage-gated calcium channel activity"/>
    <property type="evidence" value="ECO:0007669"/>
    <property type="project" value="InterPro"/>
</dbReference>
<dbReference type="GO" id="GO:0070588">
    <property type="term" value="P:calcium ion transmembrane transport"/>
    <property type="evidence" value="ECO:0000303"/>
    <property type="project" value="ComplexPortal"/>
</dbReference>
<dbReference type="GO" id="GO:0045933">
    <property type="term" value="P:positive regulation of muscle contraction"/>
    <property type="evidence" value="ECO:0000303"/>
    <property type="project" value="ComplexPortal"/>
</dbReference>
<dbReference type="FunFam" id="3.40.50.300:FF:000432">
    <property type="entry name" value="Voltage-dependent L-type calcium channel subunit beta-1 isoform 1"/>
    <property type="match status" value="1"/>
</dbReference>
<dbReference type="Gene3D" id="3.40.50.300">
    <property type="entry name" value="P-loop containing nucleotide triphosphate hydrolases"/>
    <property type="match status" value="1"/>
</dbReference>
<dbReference type="Gene3D" id="2.30.30.40">
    <property type="entry name" value="SH3 Domains"/>
    <property type="match status" value="1"/>
</dbReference>
<dbReference type="InterPro" id="IPR046937">
    <property type="entry name" value="CAB1-4_N_A-dom"/>
</dbReference>
<dbReference type="InterPro" id="IPR008145">
    <property type="entry name" value="GK/Ca_channel_bsu"/>
</dbReference>
<dbReference type="InterPro" id="IPR027417">
    <property type="entry name" value="P-loop_NTPase"/>
</dbReference>
<dbReference type="InterPro" id="IPR036028">
    <property type="entry name" value="SH3-like_dom_sf"/>
</dbReference>
<dbReference type="InterPro" id="IPR001452">
    <property type="entry name" value="SH3_domain"/>
</dbReference>
<dbReference type="InterPro" id="IPR005443">
    <property type="entry name" value="VDCC_L_b1su"/>
</dbReference>
<dbReference type="InterPro" id="IPR000584">
    <property type="entry name" value="VDCC_L_bsu"/>
</dbReference>
<dbReference type="PANTHER" id="PTHR11824">
    <property type="entry name" value="VOLTAGE-DEPENDENT CALCIUM CHANNEL BETA SUBUNIT"/>
    <property type="match status" value="1"/>
</dbReference>
<dbReference type="Pfam" id="PF00625">
    <property type="entry name" value="Guanylate_kin"/>
    <property type="match status" value="1"/>
</dbReference>
<dbReference type="Pfam" id="PF12052">
    <property type="entry name" value="VGCC_beta4Aa_N"/>
    <property type="match status" value="1"/>
</dbReference>
<dbReference type="PRINTS" id="PR01626">
    <property type="entry name" value="LCACHANNELB"/>
</dbReference>
<dbReference type="PRINTS" id="PR01627">
    <property type="entry name" value="LCACHANNELB1"/>
</dbReference>
<dbReference type="SMART" id="SM00072">
    <property type="entry name" value="GuKc"/>
    <property type="match status" value="1"/>
</dbReference>
<dbReference type="SUPFAM" id="SSF52540">
    <property type="entry name" value="P-loop containing nucleoside triphosphate hydrolases"/>
    <property type="match status" value="1"/>
</dbReference>
<dbReference type="SUPFAM" id="SSF50044">
    <property type="entry name" value="SH3-domain"/>
    <property type="match status" value="1"/>
</dbReference>
<dbReference type="PROSITE" id="PS50002">
    <property type="entry name" value="SH3"/>
    <property type="match status" value="1"/>
</dbReference>
<proteinExistence type="evidence at protein level"/>
<comment type="function">
    <text evidence="2 8">Regulatory subunit of L-type calcium channels (PubMed:7509046). Regulates the activity of L-type calcium channels that contain CACNA1A as pore-forming subunit (PubMed:7509046). Regulates the activity of L-type calcium channels that contain CACNA1C as pore-forming subunit and increases the presence of the channel complex at the cell membrane. Required for functional expression L-type calcium channels that contain CACNA1D as pore-forming subunit. Regulates the activity of L-type calcium channels that contain CACNA1B as pore-forming subunit (By similarity).</text>
</comment>
<comment type="subunit">
    <text evidence="1 2 3 6 7 8">Regulatory subunit of L-type calcium channels that consist of a pore-forming alpha subunit and auxiliary beta, gamma and delta subunits (PubMed:27580036, PubMed:7509046). Interacts with CACNA1A, CACNA1B, CACNA1C and CACNA1S (PubMed:7509046). Component of a calcium channel complex consisting of a pore-forming alpha subunit (CACNA1S) and the ancillary subunits CACNB1 or CACNB2, CACNG1 and CACNA2D1 (PubMed:27580036). Identified in a complex with CACNA1C (PubMed:21127204, PubMed:7509046). Identified in a complex with the L-type calcium channel subunits CACNA1C, CACNA2D1, CACNB1 and one of the gamma subunits (CACNG4, CACNG6, CACNG7, or CACNG8) (PubMed:21127204). Part of a L-type calcium channel complex that contains CACNA1D, CACNA2D1 and CACNB1. Part of a L-type calcium channel complex that contains CACNA1B, CACNA2D1 and CACNB1 (By similarity). Interacts with JSRP1. Interacts with RYR1 (By similarity). Interacts with CBARP (By similarity).</text>
</comment>
<comment type="interaction">
    <interactant intactId="EBI-978604">
        <id>P19517</id>
    </interactant>
    <interactant intactId="EBI-8613624">
        <id>P07293</id>
        <label>CACNA1S</label>
    </interactant>
    <organismsDiffer>false</organismsDiffer>
    <experiments>4</experiments>
</comment>
<comment type="subcellular location">
    <subcellularLocation>
        <location evidence="7 10">Cell membrane</location>
        <location evidence="7 10">Sarcolemma</location>
        <topology evidence="7 10">Peripheral membrane protein</topology>
        <orientation evidence="7 10">Cytoplasmic side</orientation>
    </subcellularLocation>
    <subcellularLocation>
        <location evidence="2">Cell membrane</location>
        <topology evidence="7 10">Peripheral membrane protein</topology>
    </subcellularLocation>
</comment>
<comment type="PTM">
    <text>The N-terminus is blocked.</text>
</comment>
<comment type="similarity">
    <text evidence="9">Belongs to the calcium channel beta subunit family.</text>
</comment>